<accession>Q9VVA6</accession>
<accession>Q8SYK7</accession>
<evidence type="ECO:0000255" key="1">
    <source>
        <dbReference type="PROSITE-ProRule" id="PRU00547"/>
    </source>
</evidence>
<evidence type="ECO:0000256" key="2">
    <source>
        <dbReference type="SAM" id="MobiDB-lite"/>
    </source>
</evidence>
<evidence type="ECO:0000269" key="3">
    <source>
    </source>
</evidence>
<evidence type="ECO:0000269" key="4">
    <source>
    </source>
</evidence>
<evidence type="ECO:0000269" key="5">
    <source>
    </source>
</evidence>
<evidence type="ECO:0000303" key="6">
    <source>
    </source>
</evidence>
<evidence type="ECO:0000305" key="7"/>
<evidence type="ECO:0000312" key="8">
    <source>
        <dbReference type="EMBL" id="AAL49107.1"/>
    </source>
</evidence>
<evidence type="ECO:0000312" key="9">
    <source>
        <dbReference type="EMBL" id="AAP93640.1"/>
    </source>
</evidence>
<evidence type="ECO:0000312" key="10">
    <source>
        <dbReference type="FlyBase" id="FBgn0021768"/>
    </source>
</evidence>
<evidence type="ECO:0000312" key="11">
    <source>
        <dbReference type="Proteomes" id="UP000000803"/>
    </source>
</evidence>
<feature type="chain" id="PRO_0000455830" description="Nuclear migration protein nudC">
    <location>
        <begin position="1"/>
        <end position="332"/>
    </location>
</feature>
<feature type="domain" description="CS" evidence="1">
    <location>
        <begin position="168"/>
        <end position="259"/>
    </location>
</feature>
<feature type="region of interest" description="Disordered" evidence="2">
    <location>
        <begin position="122"/>
        <end position="161"/>
    </location>
</feature>
<name>NDC_DROME</name>
<reference evidence="9" key="1">
    <citation type="journal article" date="1997" name="Mech. Dev.">
        <title>Characterization of DnudC, the Drosophila homolog of an Aspergillus gene that functions in nuclear motility.</title>
        <authorList>
            <person name="Cunniff J."/>
            <person name="Chiu Y.H."/>
            <person name="Morris N.R."/>
            <person name="Warrior R."/>
        </authorList>
    </citation>
    <scope>NUCLEOTIDE SEQUENCE [MRNA]</scope>
    <scope>FUNCTION</scope>
    <scope>DEVELOPMENTAL STAGE</scope>
</reference>
<reference evidence="11" key="2">
    <citation type="journal article" date="2000" name="Science">
        <title>The genome sequence of Drosophila melanogaster.</title>
        <authorList>
            <person name="Adams M.D."/>
            <person name="Celniker S.E."/>
            <person name="Holt R.A."/>
            <person name="Evans C.A."/>
            <person name="Gocayne J.D."/>
            <person name="Amanatides P.G."/>
            <person name="Scherer S.E."/>
            <person name="Li P.W."/>
            <person name="Hoskins R.A."/>
            <person name="Galle R.F."/>
            <person name="George R.A."/>
            <person name="Lewis S.E."/>
            <person name="Richards S."/>
            <person name="Ashburner M."/>
            <person name="Henderson S.N."/>
            <person name="Sutton G.G."/>
            <person name="Wortman J.R."/>
            <person name="Yandell M.D."/>
            <person name="Zhang Q."/>
            <person name="Chen L.X."/>
            <person name="Brandon R.C."/>
            <person name="Rogers Y.-H.C."/>
            <person name="Blazej R.G."/>
            <person name="Champe M."/>
            <person name="Pfeiffer B.D."/>
            <person name="Wan K.H."/>
            <person name="Doyle C."/>
            <person name="Baxter E.G."/>
            <person name="Helt G."/>
            <person name="Nelson C.R."/>
            <person name="Miklos G.L.G."/>
            <person name="Abril J.F."/>
            <person name="Agbayani A."/>
            <person name="An H.-J."/>
            <person name="Andrews-Pfannkoch C."/>
            <person name="Baldwin D."/>
            <person name="Ballew R.M."/>
            <person name="Basu A."/>
            <person name="Baxendale J."/>
            <person name="Bayraktaroglu L."/>
            <person name="Beasley E.M."/>
            <person name="Beeson K.Y."/>
            <person name="Benos P.V."/>
            <person name="Berman B.P."/>
            <person name="Bhandari D."/>
            <person name="Bolshakov S."/>
            <person name="Borkova D."/>
            <person name="Botchan M.R."/>
            <person name="Bouck J."/>
            <person name="Brokstein P."/>
            <person name="Brottier P."/>
            <person name="Burtis K.C."/>
            <person name="Busam D.A."/>
            <person name="Butler H."/>
            <person name="Cadieu E."/>
            <person name="Center A."/>
            <person name="Chandra I."/>
            <person name="Cherry J.M."/>
            <person name="Cawley S."/>
            <person name="Dahlke C."/>
            <person name="Davenport L.B."/>
            <person name="Davies P."/>
            <person name="de Pablos B."/>
            <person name="Delcher A."/>
            <person name="Deng Z."/>
            <person name="Mays A.D."/>
            <person name="Dew I."/>
            <person name="Dietz S.M."/>
            <person name="Dodson K."/>
            <person name="Doup L.E."/>
            <person name="Downes M."/>
            <person name="Dugan-Rocha S."/>
            <person name="Dunkov B.C."/>
            <person name="Dunn P."/>
            <person name="Durbin K.J."/>
            <person name="Evangelista C.C."/>
            <person name="Ferraz C."/>
            <person name="Ferriera S."/>
            <person name="Fleischmann W."/>
            <person name="Fosler C."/>
            <person name="Gabrielian A.E."/>
            <person name="Garg N.S."/>
            <person name="Gelbart W.M."/>
            <person name="Glasser K."/>
            <person name="Glodek A."/>
            <person name="Gong F."/>
            <person name="Gorrell J.H."/>
            <person name="Gu Z."/>
            <person name="Guan P."/>
            <person name="Harris M."/>
            <person name="Harris N.L."/>
            <person name="Harvey D.A."/>
            <person name="Heiman T.J."/>
            <person name="Hernandez J.R."/>
            <person name="Houck J."/>
            <person name="Hostin D."/>
            <person name="Houston K.A."/>
            <person name="Howland T.J."/>
            <person name="Wei M.-H."/>
            <person name="Ibegwam C."/>
            <person name="Jalali M."/>
            <person name="Kalush F."/>
            <person name="Karpen G.H."/>
            <person name="Ke Z."/>
            <person name="Kennison J.A."/>
            <person name="Ketchum K.A."/>
            <person name="Kimmel B.E."/>
            <person name="Kodira C.D."/>
            <person name="Kraft C.L."/>
            <person name="Kravitz S."/>
            <person name="Kulp D."/>
            <person name="Lai Z."/>
            <person name="Lasko P."/>
            <person name="Lei Y."/>
            <person name="Levitsky A.A."/>
            <person name="Li J.H."/>
            <person name="Li Z."/>
            <person name="Liang Y."/>
            <person name="Lin X."/>
            <person name="Liu X."/>
            <person name="Mattei B."/>
            <person name="McIntosh T.C."/>
            <person name="McLeod M.P."/>
            <person name="McPherson D."/>
            <person name="Merkulov G."/>
            <person name="Milshina N.V."/>
            <person name="Mobarry C."/>
            <person name="Morris J."/>
            <person name="Moshrefi A."/>
            <person name="Mount S.M."/>
            <person name="Moy M."/>
            <person name="Murphy B."/>
            <person name="Murphy L."/>
            <person name="Muzny D.M."/>
            <person name="Nelson D.L."/>
            <person name="Nelson D.R."/>
            <person name="Nelson K.A."/>
            <person name="Nixon K."/>
            <person name="Nusskern D.R."/>
            <person name="Pacleb J.M."/>
            <person name="Palazzolo M."/>
            <person name="Pittman G.S."/>
            <person name="Pan S."/>
            <person name="Pollard J."/>
            <person name="Puri V."/>
            <person name="Reese M.G."/>
            <person name="Reinert K."/>
            <person name="Remington K."/>
            <person name="Saunders R.D.C."/>
            <person name="Scheeler F."/>
            <person name="Shen H."/>
            <person name="Shue B.C."/>
            <person name="Siden-Kiamos I."/>
            <person name="Simpson M."/>
            <person name="Skupski M.P."/>
            <person name="Smith T.J."/>
            <person name="Spier E."/>
            <person name="Spradling A.C."/>
            <person name="Stapleton M."/>
            <person name="Strong R."/>
            <person name="Sun E."/>
            <person name="Svirskas R."/>
            <person name="Tector C."/>
            <person name="Turner R."/>
            <person name="Venter E."/>
            <person name="Wang A.H."/>
            <person name="Wang X."/>
            <person name="Wang Z.-Y."/>
            <person name="Wassarman D.A."/>
            <person name="Weinstock G.M."/>
            <person name="Weissenbach J."/>
            <person name="Williams S.M."/>
            <person name="Woodage T."/>
            <person name="Worley K.C."/>
            <person name="Wu D."/>
            <person name="Yang S."/>
            <person name="Yao Q.A."/>
            <person name="Ye J."/>
            <person name="Yeh R.-F."/>
            <person name="Zaveri J.S."/>
            <person name="Zhan M."/>
            <person name="Zhang G."/>
            <person name="Zhao Q."/>
            <person name="Zheng L."/>
            <person name="Zheng X.H."/>
            <person name="Zhong F.N."/>
            <person name="Zhong W."/>
            <person name="Zhou X."/>
            <person name="Zhu S.C."/>
            <person name="Zhu X."/>
            <person name="Smith H.O."/>
            <person name="Gibbs R.A."/>
            <person name="Myers E.W."/>
            <person name="Rubin G.M."/>
            <person name="Venter J.C."/>
        </authorList>
    </citation>
    <scope>NUCLEOTIDE SEQUENCE [LARGE SCALE GENOMIC DNA]</scope>
    <source>
        <strain evidence="11">Berkeley</strain>
    </source>
</reference>
<reference evidence="11" key="3">
    <citation type="journal article" date="2002" name="Genome Biol.">
        <title>Annotation of the Drosophila melanogaster euchromatic genome: a systematic review.</title>
        <authorList>
            <person name="Misra S."/>
            <person name="Crosby M.A."/>
            <person name="Mungall C.J."/>
            <person name="Matthews B.B."/>
            <person name="Campbell K.S."/>
            <person name="Hradecky P."/>
            <person name="Huang Y."/>
            <person name="Kaminker J.S."/>
            <person name="Millburn G.H."/>
            <person name="Prochnik S.E."/>
            <person name="Smith C.D."/>
            <person name="Tupy J.L."/>
            <person name="Whitfield E.J."/>
            <person name="Bayraktaroglu L."/>
            <person name="Berman B.P."/>
            <person name="Bettencourt B.R."/>
            <person name="Celniker S.E."/>
            <person name="de Grey A.D.N.J."/>
            <person name="Drysdale R.A."/>
            <person name="Harris N.L."/>
            <person name="Richter J."/>
            <person name="Russo S."/>
            <person name="Schroeder A.J."/>
            <person name="Shu S.Q."/>
            <person name="Stapleton M."/>
            <person name="Yamada C."/>
            <person name="Ashburner M."/>
            <person name="Gelbart W.M."/>
            <person name="Rubin G.M."/>
            <person name="Lewis S.E."/>
        </authorList>
    </citation>
    <scope>GENOME REANNOTATION</scope>
    <source>
        <strain evidence="11">Berkeley</strain>
    </source>
</reference>
<reference evidence="8" key="4">
    <citation type="journal article" date="2002" name="Genome Biol.">
        <title>A Drosophila full-length cDNA resource.</title>
        <authorList>
            <person name="Stapleton M."/>
            <person name="Carlson J.W."/>
            <person name="Brokstein P."/>
            <person name="Yu C."/>
            <person name="Champe M."/>
            <person name="George R.A."/>
            <person name="Guarin H."/>
            <person name="Kronmiller B."/>
            <person name="Pacleb J.M."/>
            <person name="Park S."/>
            <person name="Wan K.H."/>
            <person name="Rubin G.M."/>
            <person name="Celniker S.E."/>
        </authorList>
    </citation>
    <scope>NUCLEOTIDE SEQUENCE [LARGE SCALE MRNA]</scope>
    <source>
        <strain evidence="8">Berkeley</strain>
        <tissue evidence="8">Embryo</tissue>
    </source>
</reference>
<reference evidence="7" key="5">
    <citation type="journal article" date="2015" name="J. Neurosci.">
        <title>The Krueppel-Like factor Dar1 determines multipolar neuron morphology.</title>
        <authorList>
            <person name="Wang X."/>
            <person name="Zhang M.W."/>
            <person name="Kim J.H."/>
            <person name="Macara A.M."/>
            <person name="Sterne G."/>
            <person name="Yang T."/>
            <person name="Ye B."/>
        </authorList>
    </citation>
    <scope>FUNCTION</scope>
    <scope>DISRUPTION PHENOTYPE</scope>
</reference>
<reference evidence="7" key="6">
    <citation type="journal article" date="2021" name="RNA Biol.">
        <title>PCID2, a subunit of the Drosophila TREX-2 nuclear export complex, is essential for both mRNA nuclear export and its subsequent cytoplasmic trafficking.</title>
        <authorList>
            <person name="Glukhova A.A."/>
            <person name="Kurshakova M.M."/>
            <person name="Nabirochkina E.N."/>
            <person name="Georgieva S.G."/>
            <person name="Kopytova D.V."/>
        </authorList>
    </citation>
    <scope>FUNCTION</scope>
    <scope>INTERACTION WITH PCID2</scope>
    <scope>SUBCELLULAR LOCATION</scope>
    <scope>DEVELOPMENTAL STAGE</scope>
</reference>
<organism evidence="11">
    <name type="scientific">Drosophila melanogaster</name>
    <name type="common">Fruit fly</name>
    <dbReference type="NCBI Taxonomy" id="7227"/>
    <lineage>
        <taxon>Eukaryota</taxon>
        <taxon>Metazoa</taxon>
        <taxon>Ecdysozoa</taxon>
        <taxon>Arthropoda</taxon>
        <taxon>Hexapoda</taxon>
        <taxon>Insecta</taxon>
        <taxon>Pterygota</taxon>
        <taxon>Neoptera</taxon>
        <taxon>Endopterygota</taxon>
        <taxon>Diptera</taxon>
        <taxon>Brachycera</taxon>
        <taxon>Muscomorpha</taxon>
        <taxon>Ephydroidea</taxon>
        <taxon>Drosophilidae</taxon>
        <taxon>Drosophila</taxon>
        <taxon>Sophophora</taxon>
    </lineage>
</organism>
<protein>
    <recommendedName>
        <fullName evidence="6">Nuclear migration protein nudC</fullName>
    </recommendedName>
    <alternativeName>
        <fullName evidence="7">Nuclear distribution protein C homolog</fullName>
    </alternativeName>
</protein>
<proteinExistence type="evidence at protein level"/>
<dbReference type="EMBL" id="AE014296">
    <property type="protein sequence ID" value="AAF49407.2"/>
    <property type="molecule type" value="Genomic_DNA"/>
</dbReference>
<dbReference type="EMBL" id="AY071485">
    <property type="protein sequence ID" value="AAL49107.1"/>
    <property type="molecule type" value="mRNA"/>
</dbReference>
<dbReference type="EMBL" id="AY328470">
    <property type="protein sequence ID" value="AAP93640.1"/>
    <property type="molecule type" value="mRNA"/>
</dbReference>
<dbReference type="EMBL" id="AE014296">
    <property type="protein sequence ID" value="AFH04476.1"/>
    <property type="molecule type" value="Genomic_DNA"/>
</dbReference>
<dbReference type="RefSeq" id="NP_001246805.1">
    <property type="nucleotide sequence ID" value="NM_001259876.1"/>
</dbReference>
<dbReference type="RefSeq" id="NP_648923.1">
    <property type="nucleotide sequence ID" value="NM_140666.4"/>
</dbReference>
<dbReference type="SMR" id="Q9VVA6"/>
<dbReference type="FunCoup" id="Q9VVA6">
    <property type="interactions" value="2012"/>
</dbReference>
<dbReference type="IntAct" id="Q9VVA6">
    <property type="interactions" value="8"/>
</dbReference>
<dbReference type="STRING" id="7227.FBpp0297079"/>
<dbReference type="PaxDb" id="7227-FBpp0297079"/>
<dbReference type="DNASU" id="39879"/>
<dbReference type="EnsemblMetazoa" id="FBtr0075328">
    <property type="protein sequence ID" value="FBpp0075087"/>
    <property type="gene ID" value="FBgn0021768"/>
</dbReference>
<dbReference type="EnsemblMetazoa" id="FBtr0305912">
    <property type="protein sequence ID" value="FBpp0297079"/>
    <property type="gene ID" value="FBgn0021768"/>
</dbReference>
<dbReference type="GeneID" id="39879"/>
<dbReference type="KEGG" id="dme:Dmel_CG9710"/>
<dbReference type="UCSC" id="CG9710-RA">
    <property type="organism name" value="d. melanogaster"/>
</dbReference>
<dbReference type="AGR" id="FB:FBgn0021768"/>
<dbReference type="CTD" id="10726"/>
<dbReference type="FlyBase" id="FBgn0021768">
    <property type="gene designation" value="nudC"/>
</dbReference>
<dbReference type="VEuPathDB" id="VectorBase:FBgn0021768"/>
<dbReference type="eggNOG" id="KOG2265">
    <property type="taxonomic scope" value="Eukaryota"/>
</dbReference>
<dbReference type="GeneTree" id="ENSGT00940000155361"/>
<dbReference type="HOGENOM" id="CLU_047332_1_0_1"/>
<dbReference type="InParanoid" id="Q9VVA6"/>
<dbReference type="OMA" id="NQMEWWS"/>
<dbReference type="OrthoDB" id="416217at2759"/>
<dbReference type="Reactome" id="R-DME-9648025">
    <property type="pathway name" value="EML4 and NUDC in mitotic spindle formation"/>
</dbReference>
<dbReference type="BioGRID-ORCS" id="39879">
    <property type="hits" value="0 hits in 1 CRISPR screen"/>
</dbReference>
<dbReference type="GenomeRNAi" id="39879"/>
<dbReference type="PRO" id="PR:Q9VVA6"/>
<dbReference type="Proteomes" id="UP000000803">
    <property type="component" value="Chromosome 3L"/>
</dbReference>
<dbReference type="Bgee" id="FBgn0021768">
    <property type="expression patterns" value="Expressed in embryonic/larval hemocyte (Drosophila) and 116 other cell types or tissues"/>
</dbReference>
<dbReference type="GO" id="GO:0005737">
    <property type="term" value="C:cytoplasm"/>
    <property type="evidence" value="ECO:0000314"/>
    <property type="project" value="FlyBase"/>
</dbReference>
<dbReference type="GO" id="GO:0005829">
    <property type="term" value="C:cytosol"/>
    <property type="evidence" value="ECO:0007005"/>
    <property type="project" value="FlyBase"/>
</dbReference>
<dbReference type="GO" id="GO:0051082">
    <property type="term" value="F:unfolded protein binding"/>
    <property type="evidence" value="ECO:0000318"/>
    <property type="project" value="GO_Central"/>
</dbReference>
<dbReference type="GO" id="GO:0051028">
    <property type="term" value="P:mRNA transport"/>
    <property type="evidence" value="ECO:0007669"/>
    <property type="project" value="UniProtKB-KW"/>
</dbReference>
<dbReference type="GO" id="GO:0007097">
    <property type="term" value="P:nuclear migration"/>
    <property type="evidence" value="ECO:0000250"/>
    <property type="project" value="FlyBase"/>
</dbReference>
<dbReference type="GO" id="GO:0051647">
    <property type="term" value="P:nucleus localization"/>
    <property type="evidence" value="ECO:0000315"/>
    <property type="project" value="FlyBase"/>
</dbReference>
<dbReference type="GO" id="GO:0050775">
    <property type="term" value="P:positive regulation of dendrite morphogenesis"/>
    <property type="evidence" value="ECO:0000316"/>
    <property type="project" value="FlyBase"/>
</dbReference>
<dbReference type="GO" id="GO:0006457">
    <property type="term" value="P:protein folding"/>
    <property type="evidence" value="ECO:0000318"/>
    <property type="project" value="GO_Central"/>
</dbReference>
<dbReference type="CDD" id="cd06492">
    <property type="entry name" value="p23_mNUDC_like"/>
    <property type="match status" value="1"/>
</dbReference>
<dbReference type="FunFam" id="2.60.40.790:FF:000001">
    <property type="entry name" value="Nuclear migration protein nudC"/>
    <property type="match status" value="1"/>
</dbReference>
<dbReference type="Gene3D" id="2.60.40.790">
    <property type="match status" value="1"/>
</dbReference>
<dbReference type="InterPro" id="IPR007052">
    <property type="entry name" value="CS_dom"/>
</dbReference>
<dbReference type="InterPro" id="IPR008978">
    <property type="entry name" value="HSP20-like_chaperone"/>
</dbReference>
<dbReference type="InterPro" id="IPR037898">
    <property type="entry name" value="NudC_fam"/>
</dbReference>
<dbReference type="InterPro" id="IPR025934">
    <property type="entry name" value="NudC_N_dom"/>
</dbReference>
<dbReference type="PANTHER" id="PTHR12356:SF3">
    <property type="entry name" value="NUCLEAR MIGRATION PROTEIN NUDC"/>
    <property type="match status" value="1"/>
</dbReference>
<dbReference type="PANTHER" id="PTHR12356">
    <property type="entry name" value="NUCLEAR MOVEMENT PROTEIN NUDC"/>
    <property type="match status" value="1"/>
</dbReference>
<dbReference type="Pfam" id="PF04969">
    <property type="entry name" value="CS"/>
    <property type="match status" value="1"/>
</dbReference>
<dbReference type="Pfam" id="PF14050">
    <property type="entry name" value="Nudc_N"/>
    <property type="match status" value="1"/>
</dbReference>
<dbReference type="SUPFAM" id="SSF49764">
    <property type="entry name" value="HSP20-like chaperones"/>
    <property type="match status" value="1"/>
</dbReference>
<dbReference type="PROSITE" id="PS51203">
    <property type="entry name" value="CS"/>
    <property type="match status" value="1"/>
</dbReference>
<comment type="function">
    <text evidence="3 4 5">Chaperone protein with functions in nuclear localization and cytoplasmic mRNA trafficking (PubMed:26490864, PubMed:33602059, PubMed:9376324). In postmitotic neurons, acts with nudE downstream of dar1 to ensure correct positioning of the nuclei in primary dendrites and as a consequence, is required for determining multipolar neuron morphology (PubMed:26490864). Stabilizes PCID2 in the cytoplasm and thereby is required for promoting cytoplasmic mRNA trafficking (PubMed:33602059).</text>
</comment>
<comment type="subunit">
    <text evidence="4">Interacts with PCID2.</text>
</comment>
<comment type="interaction">
    <interactant intactId="EBI-3415603">
        <id>Q9VVA6</id>
    </interactant>
    <interactant intactId="EBI-123918">
        <id>Q9VTL1</id>
        <label>PCID2</label>
    </interactant>
    <organismsDiffer>false</organismsDiffer>
    <experiments>3</experiments>
</comment>
<comment type="subcellular location">
    <subcellularLocation>
        <location evidence="4">Cytoplasm</location>
    </subcellularLocation>
</comment>
<comment type="developmental stage">
    <text evidence="4 5">Embryos (at protein level) (PubMed:33602059). Detected in embryos and adults (PubMed:9376324).</text>
</comment>
<comment type="disruption phenotype">
    <text evidence="3">RNAi-mediated knockdown results in multipolar Class I dendritic arborizing neurons forming a bipolar morphology (PubMed:26490864). Dendritic arborization is unaffected (PubMed:26490864).</text>
</comment>
<comment type="similarity">
    <text evidence="7">Belongs to the nudC family.</text>
</comment>
<gene>
    <name evidence="6 10" type="primary">nudC</name>
    <name evidence="10" type="ORF">CG9710</name>
</gene>
<keyword id="KW-0143">Chaperone</keyword>
<keyword id="KW-0963">Cytoplasm</keyword>
<keyword id="KW-0509">mRNA transport</keyword>
<keyword id="KW-0597">Phosphoprotein</keyword>
<keyword id="KW-1185">Reference proteome</keyword>
<keyword id="KW-0813">Transport</keyword>
<sequence length="332" mass="37792">MAAEEGKFDNILLAVAEKHHGGVPEFLGTLASFLRRKTDFFTGAKQTEWEKLLLDVFNKESKLAVTENYEKIKAREASQRLKAEKERAERKARKQEIDDNKICDITDEEAAAIIKEEETKKRQQLLDSAGGEPSASNRDGISKPIEKVDDESDKSELGKLMPNAGNGCTLENYTWTQTLEEVELKIPFNLTFGLRARDLVISIGKKSLKVGIKGQTPIIDGELCGEVKTEESVWVLQDSKTVMITLDKINKMNWWSRLVTTDPEISTRKINPESSKLSDLDGETRSMVEKMMYDQRQKELGLPTSEDRKKQDILEKFKQQHPEMDFSKCKFN</sequence>